<reference key="1">
    <citation type="submission" date="2008-06" db="EMBL/GenBank/DDBJ databases">
        <title>Complete sequence of Chlorobium phaeobacteroides BS1.</title>
        <authorList>
            <consortium name="US DOE Joint Genome Institute"/>
            <person name="Lucas S."/>
            <person name="Copeland A."/>
            <person name="Lapidus A."/>
            <person name="Glavina del Rio T."/>
            <person name="Dalin E."/>
            <person name="Tice H."/>
            <person name="Bruce D."/>
            <person name="Goodwin L."/>
            <person name="Pitluck S."/>
            <person name="Schmutz J."/>
            <person name="Larimer F."/>
            <person name="Land M."/>
            <person name="Hauser L."/>
            <person name="Kyrpides N."/>
            <person name="Ovchinnikova G."/>
            <person name="Li T."/>
            <person name="Liu Z."/>
            <person name="Zhao F."/>
            <person name="Overmann J."/>
            <person name="Bryant D.A."/>
            <person name="Richardson P."/>
        </authorList>
    </citation>
    <scope>NUCLEOTIDE SEQUENCE [LARGE SCALE GENOMIC DNA]</scope>
    <source>
        <strain>BS1</strain>
    </source>
</reference>
<proteinExistence type="inferred from homology"/>
<comment type="function">
    <text evidence="1">Succinyl-CoA synthetase functions in the citric acid cycle (TCA), coupling the hydrolysis of succinyl-CoA to the synthesis of either ATP or GTP and thus represents the only step of substrate-level phosphorylation in the TCA. The beta subunit provides nucleotide specificity of the enzyme and binds the substrate succinate, while the binding sites for coenzyme A and phosphate are found in the alpha subunit.</text>
</comment>
<comment type="catalytic activity">
    <reaction evidence="1">
        <text>succinate + ATP + CoA = succinyl-CoA + ADP + phosphate</text>
        <dbReference type="Rhea" id="RHEA:17661"/>
        <dbReference type="ChEBI" id="CHEBI:30031"/>
        <dbReference type="ChEBI" id="CHEBI:30616"/>
        <dbReference type="ChEBI" id="CHEBI:43474"/>
        <dbReference type="ChEBI" id="CHEBI:57287"/>
        <dbReference type="ChEBI" id="CHEBI:57292"/>
        <dbReference type="ChEBI" id="CHEBI:456216"/>
        <dbReference type="EC" id="6.2.1.5"/>
    </reaction>
    <physiologicalReaction direction="right-to-left" evidence="1">
        <dbReference type="Rhea" id="RHEA:17663"/>
    </physiologicalReaction>
</comment>
<comment type="catalytic activity">
    <reaction evidence="1">
        <text>GTP + succinate + CoA = succinyl-CoA + GDP + phosphate</text>
        <dbReference type="Rhea" id="RHEA:22120"/>
        <dbReference type="ChEBI" id="CHEBI:30031"/>
        <dbReference type="ChEBI" id="CHEBI:37565"/>
        <dbReference type="ChEBI" id="CHEBI:43474"/>
        <dbReference type="ChEBI" id="CHEBI:57287"/>
        <dbReference type="ChEBI" id="CHEBI:57292"/>
        <dbReference type="ChEBI" id="CHEBI:58189"/>
    </reaction>
    <physiologicalReaction direction="right-to-left" evidence="1">
        <dbReference type="Rhea" id="RHEA:22122"/>
    </physiologicalReaction>
</comment>
<comment type="cofactor">
    <cofactor evidence="1">
        <name>Mg(2+)</name>
        <dbReference type="ChEBI" id="CHEBI:18420"/>
    </cofactor>
    <text evidence="1">Binds 1 Mg(2+) ion per subunit.</text>
</comment>
<comment type="pathway">
    <text evidence="1">Carbohydrate metabolism; tricarboxylic acid cycle; succinate from succinyl-CoA (ligase route): step 1/1.</text>
</comment>
<comment type="subunit">
    <text evidence="1">Heterotetramer of two alpha and two beta subunits.</text>
</comment>
<comment type="similarity">
    <text evidence="1">Belongs to the succinate/malate CoA ligase beta subunit family.</text>
</comment>
<accession>B3EN95</accession>
<sequence length="391" mass="41945">MNIHEYQGKDILRKFGVSVPKGIVAFSPAEARQAAEQLFEEQESNVVVVKAQIHAGGRGKAGGVKLAQSPEEAYEIAGQILGATLVTHQTGPEGKEVRRLLVEEGMNIEKEFYVGITLDRATSNNVLMVSTEGGMEIEKVAEETPDKILKIQIDPLHGLLGFQARQAAFFLELDGERFKNGVKFITALYNAYVSIDASLAEINPLVVTAEGRVLALDAKINFDSNALYRHKDFLELRDTGEEDPFEVEASKSNLNYVRLDGNVGCMVNGAGLAMGTMDMIQLAGGKPANFLDVGGTASPETVTEGFKIIMSDKNVKAILVNIFGGIVRCDRVAAGVIEAAKKVGLNLPVIVRLEGTNAEAAQTMLDESGLNLISANGLRDAAEKINEALAG</sequence>
<organism>
    <name type="scientific">Chlorobium phaeobacteroides (strain BS1)</name>
    <dbReference type="NCBI Taxonomy" id="331678"/>
    <lineage>
        <taxon>Bacteria</taxon>
        <taxon>Pseudomonadati</taxon>
        <taxon>Chlorobiota</taxon>
        <taxon>Chlorobiia</taxon>
        <taxon>Chlorobiales</taxon>
        <taxon>Chlorobiaceae</taxon>
        <taxon>Chlorobium/Pelodictyon group</taxon>
        <taxon>Chlorobium</taxon>
    </lineage>
</organism>
<gene>
    <name evidence="1" type="primary">sucC</name>
    <name type="ordered locus">Cphamn1_0667</name>
</gene>
<protein>
    <recommendedName>
        <fullName evidence="1">Succinate--CoA ligase [ADP-forming] subunit beta</fullName>
        <ecNumber evidence="1">6.2.1.5</ecNumber>
    </recommendedName>
    <alternativeName>
        <fullName evidence="1">Succinyl-CoA synthetase subunit beta</fullName>
        <shortName evidence="1">SCS-beta</shortName>
    </alternativeName>
</protein>
<name>SUCC_CHLPB</name>
<keyword id="KW-0067">ATP-binding</keyword>
<keyword id="KW-0436">Ligase</keyword>
<keyword id="KW-0460">Magnesium</keyword>
<keyword id="KW-0479">Metal-binding</keyword>
<keyword id="KW-0547">Nucleotide-binding</keyword>
<keyword id="KW-0816">Tricarboxylic acid cycle</keyword>
<dbReference type="EC" id="6.2.1.5" evidence="1"/>
<dbReference type="EMBL" id="CP001101">
    <property type="protein sequence ID" value="ACE03625.1"/>
    <property type="molecule type" value="Genomic_DNA"/>
</dbReference>
<dbReference type="SMR" id="B3EN95"/>
<dbReference type="STRING" id="331678.Cphamn1_0667"/>
<dbReference type="KEGG" id="cpb:Cphamn1_0667"/>
<dbReference type="eggNOG" id="COG0045">
    <property type="taxonomic scope" value="Bacteria"/>
</dbReference>
<dbReference type="HOGENOM" id="CLU_037430_0_2_10"/>
<dbReference type="OrthoDB" id="9802602at2"/>
<dbReference type="UniPathway" id="UPA00223">
    <property type="reaction ID" value="UER00999"/>
</dbReference>
<dbReference type="GO" id="GO:0005829">
    <property type="term" value="C:cytosol"/>
    <property type="evidence" value="ECO:0007669"/>
    <property type="project" value="TreeGrafter"/>
</dbReference>
<dbReference type="GO" id="GO:0042709">
    <property type="term" value="C:succinate-CoA ligase complex"/>
    <property type="evidence" value="ECO:0007669"/>
    <property type="project" value="TreeGrafter"/>
</dbReference>
<dbReference type="GO" id="GO:0005524">
    <property type="term" value="F:ATP binding"/>
    <property type="evidence" value="ECO:0007669"/>
    <property type="project" value="UniProtKB-UniRule"/>
</dbReference>
<dbReference type="GO" id="GO:0000287">
    <property type="term" value="F:magnesium ion binding"/>
    <property type="evidence" value="ECO:0007669"/>
    <property type="project" value="UniProtKB-UniRule"/>
</dbReference>
<dbReference type="GO" id="GO:0004775">
    <property type="term" value="F:succinate-CoA ligase (ADP-forming) activity"/>
    <property type="evidence" value="ECO:0007669"/>
    <property type="project" value="UniProtKB-UniRule"/>
</dbReference>
<dbReference type="GO" id="GO:0004776">
    <property type="term" value="F:succinate-CoA ligase (GDP-forming) activity"/>
    <property type="evidence" value="ECO:0007669"/>
    <property type="project" value="RHEA"/>
</dbReference>
<dbReference type="GO" id="GO:0006104">
    <property type="term" value="P:succinyl-CoA metabolic process"/>
    <property type="evidence" value="ECO:0007669"/>
    <property type="project" value="TreeGrafter"/>
</dbReference>
<dbReference type="GO" id="GO:0006099">
    <property type="term" value="P:tricarboxylic acid cycle"/>
    <property type="evidence" value="ECO:0007669"/>
    <property type="project" value="UniProtKB-UniRule"/>
</dbReference>
<dbReference type="FunFam" id="3.30.1490.20:FF:000002">
    <property type="entry name" value="Succinate--CoA ligase [ADP-forming] subunit beta"/>
    <property type="match status" value="1"/>
</dbReference>
<dbReference type="FunFam" id="3.30.470.20:FF:000002">
    <property type="entry name" value="Succinate--CoA ligase [ADP-forming] subunit beta"/>
    <property type="match status" value="1"/>
</dbReference>
<dbReference type="FunFam" id="3.40.50.261:FF:000001">
    <property type="entry name" value="Succinate--CoA ligase [ADP-forming] subunit beta"/>
    <property type="match status" value="1"/>
</dbReference>
<dbReference type="Gene3D" id="3.30.1490.20">
    <property type="entry name" value="ATP-grasp fold, A domain"/>
    <property type="match status" value="1"/>
</dbReference>
<dbReference type="Gene3D" id="3.30.470.20">
    <property type="entry name" value="ATP-grasp fold, B domain"/>
    <property type="match status" value="1"/>
</dbReference>
<dbReference type="Gene3D" id="3.40.50.261">
    <property type="entry name" value="Succinyl-CoA synthetase domains"/>
    <property type="match status" value="1"/>
</dbReference>
<dbReference type="HAMAP" id="MF_00558">
    <property type="entry name" value="Succ_CoA_beta"/>
    <property type="match status" value="1"/>
</dbReference>
<dbReference type="InterPro" id="IPR011761">
    <property type="entry name" value="ATP-grasp"/>
</dbReference>
<dbReference type="InterPro" id="IPR013650">
    <property type="entry name" value="ATP-grasp_succ-CoA_synth-type"/>
</dbReference>
<dbReference type="InterPro" id="IPR013815">
    <property type="entry name" value="ATP_grasp_subdomain_1"/>
</dbReference>
<dbReference type="InterPro" id="IPR017866">
    <property type="entry name" value="Succ-CoA_synthase_bsu_CS"/>
</dbReference>
<dbReference type="InterPro" id="IPR005811">
    <property type="entry name" value="SUCC_ACL_C"/>
</dbReference>
<dbReference type="InterPro" id="IPR005809">
    <property type="entry name" value="Succ_CoA_ligase-like_bsu"/>
</dbReference>
<dbReference type="InterPro" id="IPR016102">
    <property type="entry name" value="Succinyl-CoA_synth-like"/>
</dbReference>
<dbReference type="NCBIfam" id="NF001913">
    <property type="entry name" value="PRK00696.1"/>
    <property type="match status" value="1"/>
</dbReference>
<dbReference type="NCBIfam" id="TIGR01016">
    <property type="entry name" value="sucCoAbeta"/>
    <property type="match status" value="1"/>
</dbReference>
<dbReference type="PANTHER" id="PTHR11815:SF10">
    <property type="entry name" value="SUCCINATE--COA LIGASE [GDP-FORMING] SUBUNIT BETA, MITOCHONDRIAL"/>
    <property type="match status" value="1"/>
</dbReference>
<dbReference type="PANTHER" id="PTHR11815">
    <property type="entry name" value="SUCCINYL-COA SYNTHETASE BETA CHAIN"/>
    <property type="match status" value="1"/>
</dbReference>
<dbReference type="Pfam" id="PF08442">
    <property type="entry name" value="ATP-grasp_2"/>
    <property type="match status" value="1"/>
</dbReference>
<dbReference type="Pfam" id="PF00549">
    <property type="entry name" value="Ligase_CoA"/>
    <property type="match status" value="1"/>
</dbReference>
<dbReference type="PIRSF" id="PIRSF001554">
    <property type="entry name" value="SucCS_beta"/>
    <property type="match status" value="1"/>
</dbReference>
<dbReference type="SUPFAM" id="SSF56059">
    <property type="entry name" value="Glutathione synthetase ATP-binding domain-like"/>
    <property type="match status" value="1"/>
</dbReference>
<dbReference type="SUPFAM" id="SSF52210">
    <property type="entry name" value="Succinyl-CoA synthetase domains"/>
    <property type="match status" value="1"/>
</dbReference>
<dbReference type="PROSITE" id="PS50975">
    <property type="entry name" value="ATP_GRASP"/>
    <property type="match status" value="1"/>
</dbReference>
<dbReference type="PROSITE" id="PS01217">
    <property type="entry name" value="SUCCINYL_COA_LIG_3"/>
    <property type="match status" value="1"/>
</dbReference>
<feature type="chain" id="PRO_1000129172" description="Succinate--CoA ligase [ADP-forming] subunit beta">
    <location>
        <begin position="1"/>
        <end position="391"/>
    </location>
</feature>
<feature type="domain" description="ATP-grasp" evidence="1">
    <location>
        <begin position="9"/>
        <end position="248"/>
    </location>
</feature>
<feature type="binding site" evidence="1">
    <location>
        <position position="50"/>
    </location>
    <ligand>
        <name>ATP</name>
        <dbReference type="ChEBI" id="CHEBI:30616"/>
    </ligand>
</feature>
<feature type="binding site" evidence="1">
    <location>
        <begin position="57"/>
        <end position="59"/>
    </location>
    <ligand>
        <name>ATP</name>
        <dbReference type="ChEBI" id="CHEBI:30616"/>
    </ligand>
</feature>
<feature type="binding site" evidence="1">
    <location>
        <position position="103"/>
    </location>
    <ligand>
        <name>ATP</name>
        <dbReference type="ChEBI" id="CHEBI:30616"/>
    </ligand>
</feature>
<feature type="binding site" evidence="1">
    <location>
        <position position="106"/>
    </location>
    <ligand>
        <name>ATP</name>
        <dbReference type="ChEBI" id="CHEBI:30616"/>
    </ligand>
</feature>
<feature type="binding site" evidence="1">
    <location>
        <position position="111"/>
    </location>
    <ligand>
        <name>ATP</name>
        <dbReference type="ChEBI" id="CHEBI:30616"/>
    </ligand>
</feature>
<feature type="binding site" evidence="1">
    <location>
        <position position="203"/>
    </location>
    <ligand>
        <name>Mg(2+)</name>
        <dbReference type="ChEBI" id="CHEBI:18420"/>
    </ligand>
</feature>
<feature type="binding site" evidence="1">
    <location>
        <position position="217"/>
    </location>
    <ligand>
        <name>Mg(2+)</name>
        <dbReference type="ChEBI" id="CHEBI:18420"/>
    </ligand>
</feature>
<feature type="binding site" evidence="1">
    <location>
        <position position="268"/>
    </location>
    <ligand>
        <name>substrate</name>
        <note>ligand shared with subunit alpha</note>
    </ligand>
</feature>
<feature type="binding site" evidence="1">
    <location>
        <begin position="325"/>
        <end position="327"/>
    </location>
    <ligand>
        <name>substrate</name>
        <note>ligand shared with subunit alpha</note>
    </ligand>
</feature>
<evidence type="ECO:0000255" key="1">
    <source>
        <dbReference type="HAMAP-Rule" id="MF_00558"/>
    </source>
</evidence>